<keyword id="KW-0007">Acetylation</keyword>
<keyword id="KW-0067">ATP-binding</keyword>
<keyword id="KW-0963">Cytoplasm</keyword>
<keyword id="KW-0206">Cytoskeleton</keyword>
<keyword id="KW-0547">Nucleotide-binding</keyword>
<keyword id="KW-1185">Reference proteome</keyword>
<dbReference type="EMBL" id="S45367">
    <property type="protein sequence ID" value="AAC15824.1"/>
    <property type="molecule type" value="mRNA"/>
</dbReference>
<dbReference type="PIR" id="S29075">
    <property type="entry name" value="S29075"/>
</dbReference>
<dbReference type="RefSeq" id="NP_001003164.1">
    <property type="nucleotide sequence ID" value="NM_001003164.1"/>
</dbReference>
<dbReference type="SMR" id="P61162"/>
<dbReference type="FunCoup" id="P61162">
    <property type="interactions" value="2121"/>
</dbReference>
<dbReference type="STRING" id="9615.ENSCAFP00000044336"/>
<dbReference type="PaxDb" id="9612-ENSCAFP00000014989"/>
<dbReference type="Ensembl" id="ENSCAFT00000016205.4">
    <property type="protein sequence ID" value="ENSCAFP00000014989.2"/>
    <property type="gene ID" value="ENSCAFG00000010210.4"/>
</dbReference>
<dbReference type="Ensembl" id="ENSCAFT00030045385.1">
    <property type="protein sequence ID" value="ENSCAFP00030039632.1"/>
    <property type="gene ID" value="ENSCAFG00030024658.1"/>
</dbReference>
<dbReference type="Ensembl" id="ENSCAFT00040043618.1">
    <property type="protein sequence ID" value="ENSCAFP00040038052.1"/>
    <property type="gene ID" value="ENSCAFG00040023403.1"/>
</dbReference>
<dbReference type="Ensembl" id="ENSCAFT00845043808.1">
    <property type="protein sequence ID" value="ENSCAFP00845034328.1"/>
    <property type="gene ID" value="ENSCAFG00845024750.1"/>
</dbReference>
<dbReference type="GeneID" id="403791"/>
<dbReference type="KEGG" id="cfa:403791"/>
<dbReference type="CTD" id="10121"/>
<dbReference type="VEuPathDB" id="HostDB:ENSCAFG00845024750"/>
<dbReference type="VGNC" id="VGNC:37552">
    <property type="gene designation" value="ACTR1A"/>
</dbReference>
<dbReference type="eggNOG" id="KOG0676">
    <property type="taxonomic scope" value="Eukaryota"/>
</dbReference>
<dbReference type="GeneTree" id="ENSGT00940000155782"/>
<dbReference type="HOGENOM" id="CLU_027965_0_1_1"/>
<dbReference type="InParanoid" id="P61162"/>
<dbReference type="OMA" id="CIHSRFM"/>
<dbReference type="OrthoDB" id="5132116at2759"/>
<dbReference type="TreeFam" id="TF300420"/>
<dbReference type="Reactome" id="R-CFA-2132295">
    <property type="pathway name" value="MHC class II antigen presentation"/>
</dbReference>
<dbReference type="Reactome" id="R-CFA-2565942">
    <property type="pathway name" value="Regulation of PLK1 Activity at G2/M Transition"/>
</dbReference>
<dbReference type="Reactome" id="R-CFA-3371497">
    <property type="pathway name" value="HSP90 chaperone cycle for steroid hormone receptors (SHR) in the presence of ligand"/>
</dbReference>
<dbReference type="Reactome" id="R-CFA-380259">
    <property type="pathway name" value="Loss of Nlp from mitotic centrosomes"/>
</dbReference>
<dbReference type="Reactome" id="R-CFA-380270">
    <property type="pathway name" value="Recruitment of mitotic centrosome proteins and complexes"/>
</dbReference>
<dbReference type="Reactome" id="R-CFA-380284">
    <property type="pathway name" value="Loss of proteins required for interphase microtubule organization from the centrosome"/>
</dbReference>
<dbReference type="Reactome" id="R-CFA-380320">
    <property type="pathway name" value="Recruitment of NuMA to mitotic centrosomes"/>
</dbReference>
<dbReference type="Reactome" id="R-CFA-5620912">
    <property type="pathway name" value="Anchoring of the basal body to the plasma membrane"/>
</dbReference>
<dbReference type="Reactome" id="R-CFA-6807878">
    <property type="pathway name" value="COPI-mediated anterograde transport"/>
</dbReference>
<dbReference type="Reactome" id="R-CFA-8854518">
    <property type="pathway name" value="AURKA Activation by TPX2"/>
</dbReference>
<dbReference type="Proteomes" id="UP000002254">
    <property type="component" value="Chromosome 28"/>
</dbReference>
<dbReference type="Proteomes" id="UP000694429">
    <property type="component" value="Chromosome 28"/>
</dbReference>
<dbReference type="Proteomes" id="UP000694542">
    <property type="component" value="Chromosome 28"/>
</dbReference>
<dbReference type="Proteomes" id="UP000805418">
    <property type="component" value="Chromosome 28"/>
</dbReference>
<dbReference type="Bgee" id="ENSCAFG00000010210">
    <property type="expression patterns" value="Expressed in hypothalamus and 45 other cell types or tissues"/>
</dbReference>
<dbReference type="GO" id="GO:0005938">
    <property type="term" value="C:cell cortex"/>
    <property type="evidence" value="ECO:0007669"/>
    <property type="project" value="UniProtKB-SubCell"/>
</dbReference>
<dbReference type="GO" id="GO:0005813">
    <property type="term" value="C:centrosome"/>
    <property type="evidence" value="ECO:0007669"/>
    <property type="project" value="UniProtKB-SubCell"/>
</dbReference>
<dbReference type="GO" id="GO:0005737">
    <property type="term" value="C:cytoplasm"/>
    <property type="evidence" value="ECO:0000250"/>
    <property type="project" value="AgBase"/>
</dbReference>
<dbReference type="GO" id="GO:0005869">
    <property type="term" value="C:dynactin complex"/>
    <property type="evidence" value="ECO:0000318"/>
    <property type="project" value="GO_Central"/>
</dbReference>
<dbReference type="GO" id="GO:0005524">
    <property type="term" value="F:ATP binding"/>
    <property type="evidence" value="ECO:0007669"/>
    <property type="project" value="UniProtKB-KW"/>
</dbReference>
<dbReference type="CDD" id="cd10216">
    <property type="entry name" value="ASKHA_NBD_Arp1"/>
    <property type="match status" value="1"/>
</dbReference>
<dbReference type="FunFam" id="3.30.420.40:FF:000188">
    <property type="entry name" value="Actin like 6B"/>
    <property type="match status" value="2"/>
</dbReference>
<dbReference type="FunFam" id="3.90.640.10:FF:000008">
    <property type="entry name" value="alpha-centractin isoform X1"/>
    <property type="match status" value="1"/>
</dbReference>
<dbReference type="Gene3D" id="3.30.420.40">
    <property type="match status" value="2"/>
</dbReference>
<dbReference type="Gene3D" id="3.90.640.10">
    <property type="entry name" value="Actin, Chain A, domain 4"/>
    <property type="match status" value="1"/>
</dbReference>
<dbReference type="InterPro" id="IPR004000">
    <property type="entry name" value="Actin"/>
</dbReference>
<dbReference type="InterPro" id="IPR020902">
    <property type="entry name" value="Actin/actin-like_CS"/>
</dbReference>
<dbReference type="InterPro" id="IPR004001">
    <property type="entry name" value="Actin_CS"/>
</dbReference>
<dbReference type="InterPro" id="IPR043129">
    <property type="entry name" value="ATPase_NBD"/>
</dbReference>
<dbReference type="PANTHER" id="PTHR11937">
    <property type="entry name" value="ACTIN"/>
    <property type="match status" value="1"/>
</dbReference>
<dbReference type="Pfam" id="PF00022">
    <property type="entry name" value="Actin"/>
    <property type="match status" value="1"/>
</dbReference>
<dbReference type="PRINTS" id="PR00190">
    <property type="entry name" value="ACTIN"/>
</dbReference>
<dbReference type="SMART" id="SM00268">
    <property type="entry name" value="ACTIN"/>
    <property type="match status" value="1"/>
</dbReference>
<dbReference type="SUPFAM" id="SSF53067">
    <property type="entry name" value="Actin-like ATPase domain"/>
    <property type="match status" value="2"/>
</dbReference>
<dbReference type="PROSITE" id="PS00432">
    <property type="entry name" value="ACTINS_2"/>
    <property type="match status" value="1"/>
</dbReference>
<dbReference type="PROSITE" id="PS01132">
    <property type="entry name" value="ACTINS_ACT_LIKE"/>
    <property type="match status" value="1"/>
</dbReference>
<feature type="chain" id="PRO_0000089057" description="Alpha-centractin">
    <location>
        <begin position="1"/>
        <end position="376"/>
    </location>
</feature>
<feature type="modified residue" description="N-acetylmethionine" evidence="2">
    <location>
        <position position="1"/>
    </location>
</feature>
<gene>
    <name type="primary">ACTR1A</name>
    <name type="synonym">CTRN1</name>
</gene>
<sequence>MESYDVIANQPVVIDNGSGVIKAGFAGDQIPKYCFPNYVGRPKHVRVMAGALEGDIFIGPKAEEHRGLLSIRYPMEHGIVKDWNDMERIWQYVYSKDQLQTFSEEHPVLLTEAPLNPRKNRERAAEVFFETFNVPALFISMQAVLSLYATGRTTGVVLDSGDGVTHAVPIYEGFAMPHSIMRIDIAGRDVSRFLRLYLRKEGYDFHSSSEFEIVKAIKERACYLSINPQKDETLETEKAQYYLPDGSTIEIGPSRFRAPELLFRPDLIGEESEGIHEVLVFAIQKSDMDLRRTLFSNIVLSGGSTLFKGFGDRLLSEVKKLAPKDVKIRISAPQERLYSTWIGGSILASLDTFKKMWVSKKEYEEDGARSIHRKTF</sequence>
<name>ACTZ_CANLF</name>
<comment type="function">
    <text evidence="1">Part of the ACTR1A/ACTB filament around which the dynactin complex is built. The dynactin multiprotein complex activates the molecular motor dynein for ultra-processive transport along microtubules.</text>
</comment>
<comment type="subunit">
    <text evidence="1 2">Part of the ACTR1A/ACTB filament around which the dynactin complex is built. The filament contains 8 copies of ACTR1A and 1 ACTB. Interacts with dynein and adapters such as BICD2 (By similarity). Interacts with BCCIP (isoform 2/alpha) (By similarity).</text>
</comment>
<comment type="subcellular location">
    <subcellularLocation>
        <location evidence="3">Cytoplasm</location>
        <location evidence="3">Cytoskeleton</location>
    </subcellularLocation>
    <subcellularLocation>
        <location evidence="2">Cytoplasm</location>
        <location evidence="2">Cytoskeleton</location>
        <location evidence="2">Microtubule organizing center</location>
        <location evidence="2">Centrosome</location>
    </subcellularLocation>
    <subcellularLocation>
        <location evidence="2">Cytoplasm</location>
        <location evidence="2">Cell cortex</location>
    </subcellularLocation>
</comment>
<comment type="similarity">
    <text evidence="4">Belongs to the actin family. ARP1 subfamily.</text>
</comment>
<accession>P61162</accession>
<accession>P42024</accession>
<protein>
    <recommendedName>
        <fullName>Alpha-centractin</fullName>
        <shortName>Centractin</shortName>
    </recommendedName>
    <alternativeName>
        <fullName>ARP1</fullName>
    </alternativeName>
    <alternativeName>
        <fullName>Actin-RPV</fullName>
    </alternativeName>
    <alternativeName>
        <fullName>Centrosome-associated actin homolog</fullName>
    </alternativeName>
</protein>
<organism>
    <name type="scientific">Canis lupus familiaris</name>
    <name type="common">Dog</name>
    <name type="synonym">Canis familiaris</name>
    <dbReference type="NCBI Taxonomy" id="9615"/>
    <lineage>
        <taxon>Eukaryota</taxon>
        <taxon>Metazoa</taxon>
        <taxon>Chordata</taxon>
        <taxon>Craniata</taxon>
        <taxon>Vertebrata</taxon>
        <taxon>Euteleostomi</taxon>
        <taxon>Mammalia</taxon>
        <taxon>Eutheria</taxon>
        <taxon>Laurasiatheria</taxon>
        <taxon>Carnivora</taxon>
        <taxon>Caniformia</taxon>
        <taxon>Canidae</taxon>
        <taxon>Canis</taxon>
    </lineage>
</organism>
<evidence type="ECO:0000250" key="1">
    <source>
        <dbReference type="UniProtKB" id="F2Z5G5"/>
    </source>
</evidence>
<evidence type="ECO:0000250" key="2">
    <source>
        <dbReference type="UniProtKB" id="P61163"/>
    </source>
</evidence>
<evidence type="ECO:0000250" key="3">
    <source>
        <dbReference type="UniProtKB" id="P85515"/>
    </source>
</evidence>
<evidence type="ECO:0000305" key="4"/>
<proteinExistence type="evidence at transcript level"/>
<reference key="1">
    <citation type="journal article" date="1992" name="Nature">
        <title>Centractin is an actin homologue associated with the centrosome.</title>
        <authorList>
            <person name="Clark S.W."/>
            <person name="Meyer D.I."/>
        </authorList>
    </citation>
    <scope>NUCLEOTIDE SEQUENCE [MRNA]</scope>
    <source>
        <strain>Cocker spaniel</strain>
        <tissue>Kidney</tissue>
    </source>
</reference>